<gene>
    <name evidence="1" type="primary">fbiD</name>
    <name type="ordered locus">Cagg_0666</name>
</gene>
<accession>B8G4W8</accession>
<evidence type="ECO:0000255" key="1">
    <source>
        <dbReference type="HAMAP-Rule" id="MF_02114"/>
    </source>
</evidence>
<evidence type="ECO:0000305" key="2"/>
<name>FBID_CHLAD</name>
<organism>
    <name type="scientific">Chloroflexus aggregans (strain MD-66 / DSM 9485)</name>
    <dbReference type="NCBI Taxonomy" id="326427"/>
    <lineage>
        <taxon>Bacteria</taxon>
        <taxon>Bacillati</taxon>
        <taxon>Chloroflexota</taxon>
        <taxon>Chloroflexia</taxon>
        <taxon>Chloroflexales</taxon>
        <taxon>Chloroflexineae</taxon>
        <taxon>Chloroflexaceae</taxon>
        <taxon>Chloroflexus</taxon>
    </lineage>
</organism>
<proteinExistence type="inferred from homology"/>
<dbReference type="EC" id="2.7.7.105" evidence="1"/>
<dbReference type="EMBL" id="CP001337">
    <property type="protein sequence ID" value="ACL23601.1"/>
    <property type="molecule type" value="Genomic_DNA"/>
</dbReference>
<dbReference type="RefSeq" id="WP_012615967.1">
    <property type="nucleotide sequence ID" value="NC_011831.1"/>
</dbReference>
<dbReference type="SMR" id="B8G4W8"/>
<dbReference type="STRING" id="326427.Cagg_0666"/>
<dbReference type="KEGG" id="cag:Cagg_0666"/>
<dbReference type="eggNOG" id="COG1920">
    <property type="taxonomic scope" value="Bacteria"/>
</dbReference>
<dbReference type="HOGENOM" id="CLU_076569_1_0_0"/>
<dbReference type="OrthoDB" id="9151145at2"/>
<dbReference type="UniPathway" id="UPA00071"/>
<dbReference type="Proteomes" id="UP000002508">
    <property type="component" value="Chromosome"/>
</dbReference>
<dbReference type="GO" id="GO:0005525">
    <property type="term" value="F:GTP binding"/>
    <property type="evidence" value="ECO:0007669"/>
    <property type="project" value="UniProtKB-KW"/>
</dbReference>
<dbReference type="GO" id="GO:0043814">
    <property type="term" value="F:phospholactate guanylyltransferase activity"/>
    <property type="evidence" value="ECO:0007669"/>
    <property type="project" value="InterPro"/>
</dbReference>
<dbReference type="GO" id="GO:0052645">
    <property type="term" value="P:F420-0 metabolic process"/>
    <property type="evidence" value="ECO:0007669"/>
    <property type="project" value="UniProtKB-UniRule"/>
</dbReference>
<dbReference type="Gene3D" id="3.90.550.10">
    <property type="entry name" value="Spore Coat Polysaccharide Biosynthesis Protein SpsA, Chain A"/>
    <property type="match status" value="1"/>
</dbReference>
<dbReference type="HAMAP" id="MF_02114">
    <property type="entry name" value="CofC"/>
    <property type="match status" value="1"/>
</dbReference>
<dbReference type="InterPro" id="IPR002835">
    <property type="entry name" value="CofC"/>
</dbReference>
<dbReference type="InterPro" id="IPR029044">
    <property type="entry name" value="Nucleotide-diphossugar_trans"/>
</dbReference>
<dbReference type="NCBIfam" id="TIGR03552">
    <property type="entry name" value="F420_cofC"/>
    <property type="match status" value="1"/>
</dbReference>
<dbReference type="PANTHER" id="PTHR40392">
    <property type="entry name" value="2-PHOSPHO-L-LACTATE GUANYLYLTRANSFERASE"/>
    <property type="match status" value="1"/>
</dbReference>
<dbReference type="PANTHER" id="PTHR40392:SF1">
    <property type="entry name" value="2-PHOSPHO-L-LACTATE GUANYLYLTRANSFERASE"/>
    <property type="match status" value="1"/>
</dbReference>
<dbReference type="Pfam" id="PF01983">
    <property type="entry name" value="CofC"/>
    <property type="match status" value="1"/>
</dbReference>
<dbReference type="SUPFAM" id="SSF53448">
    <property type="entry name" value="Nucleotide-diphospho-sugar transferases"/>
    <property type="match status" value="1"/>
</dbReference>
<keyword id="KW-0342">GTP-binding</keyword>
<keyword id="KW-0547">Nucleotide-binding</keyword>
<keyword id="KW-0548">Nucleotidyltransferase</keyword>
<keyword id="KW-0808">Transferase</keyword>
<reference key="1">
    <citation type="submission" date="2008-12" db="EMBL/GenBank/DDBJ databases">
        <title>Complete sequence of Chloroflexus aggregans DSM 9485.</title>
        <authorList>
            <consortium name="US DOE Joint Genome Institute"/>
            <person name="Lucas S."/>
            <person name="Copeland A."/>
            <person name="Lapidus A."/>
            <person name="Glavina del Rio T."/>
            <person name="Dalin E."/>
            <person name="Tice H."/>
            <person name="Pitluck S."/>
            <person name="Foster B."/>
            <person name="Larimer F."/>
            <person name="Land M."/>
            <person name="Hauser L."/>
            <person name="Kyrpides N."/>
            <person name="Mikhailova N."/>
            <person name="Bryant D.A."/>
            <person name="Richardson P."/>
        </authorList>
    </citation>
    <scope>NUCLEOTIDE SEQUENCE [LARGE SCALE GENOMIC DNA]</scope>
    <source>
        <strain>MD-66 / DSM 9485</strain>
    </source>
</reference>
<sequence length="202" mass="21649">MIGIAIPIKRLQFAKSRLAGVLAPAARQRLVLRLAQHVINAARQATGSFTMPARIWLVSADPAIAALAQASGVEWLPDRCEELNAALTEARKQIQNAGAQTMIVLAGDLPLVTAEDVAALYDALSEADLVLAPDQQQRGTNALALRLPSPLPFLFGLDSANRHVAAATQLGLRARLLTTPTLAFDLDDSERLRQYCAAERPA</sequence>
<protein>
    <recommendedName>
        <fullName evidence="1">Phosphoenolpyruvate guanylyltransferase</fullName>
        <shortName evidence="1">PEP guanylyltransferase</shortName>
        <ecNumber evidence="1">2.7.7.105</ecNumber>
    </recommendedName>
</protein>
<comment type="function">
    <text evidence="1">Guanylyltransferase that catalyzes the activation of phosphoenolpyruvate (PEP) as enolpyruvoyl-2-diphospho-5'-guanosine, via the condensation of PEP with GTP. It is involved in the biosynthesis of coenzyme F420, a hydride carrier cofactor.</text>
</comment>
<comment type="catalytic activity">
    <reaction evidence="1">
        <text>phosphoenolpyruvate + GTP + H(+) = enolpyruvoyl-2-diphospho-5'-guanosine + diphosphate</text>
        <dbReference type="Rhea" id="RHEA:30519"/>
        <dbReference type="ChEBI" id="CHEBI:15378"/>
        <dbReference type="ChEBI" id="CHEBI:33019"/>
        <dbReference type="ChEBI" id="CHEBI:37565"/>
        <dbReference type="ChEBI" id="CHEBI:58702"/>
        <dbReference type="ChEBI" id="CHEBI:143701"/>
        <dbReference type="EC" id="2.7.7.105"/>
    </reaction>
</comment>
<comment type="pathway">
    <text evidence="1">Cofactor biosynthesis; coenzyme F420 biosynthesis.</text>
</comment>
<comment type="miscellaneous">
    <text evidence="2">The exact nature of the substrate is currently not known. This entry has been annotated based on its similarity to Actinobacteria.</text>
</comment>
<comment type="similarity">
    <text evidence="1">Belongs to the CofC family.</text>
</comment>
<feature type="chain" id="PRO_0000398679" description="Phosphoenolpyruvate guanylyltransferase">
    <location>
        <begin position="1"/>
        <end position="202"/>
    </location>
</feature>
<feature type="binding site" evidence="1">
    <location>
        <position position="140"/>
    </location>
    <ligand>
        <name>phosphoenolpyruvate</name>
        <dbReference type="ChEBI" id="CHEBI:58702"/>
    </ligand>
</feature>
<feature type="binding site" evidence="1">
    <location>
        <position position="156"/>
    </location>
    <ligand>
        <name>phosphoenolpyruvate</name>
        <dbReference type="ChEBI" id="CHEBI:58702"/>
    </ligand>
</feature>
<feature type="binding site" evidence="1">
    <location>
        <position position="159"/>
    </location>
    <ligand>
        <name>phosphoenolpyruvate</name>
        <dbReference type="ChEBI" id="CHEBI:58702"/>
    </ligand>
</feature>